<reference key="1">
    <citation type="submission" date="2008-01" db="EMBL/GenBank/DDBJ databases">
        <title>Complete sequence of Thermoanaerobacter pseudethanolicus 39E.</title>
        <authorList>
            <person name="Copeland A."/>
            <person name="Lucas S."/>
            <person name="Lapidus A."/>
            <person name="Barry K."/>
            <person name="Glavina del Rio T."/>
            <person name="Dalin E."/>
            <person name="Tice H."/>
            <person name="Pitluck S."/>
            <person name="Bruce D."/>
            <person name="Goodwin L."/>
            <person name="Saunders E."/>
            <person name="Brettin T."/>
            <person name="Detter J.C."/>
            <person name="Han C."/>
            <person name="Schmutz J."/>
            <person name="Larimer F."/>
            <person name="Land M."/>
            <person name="Hauser L."/>
            <person name="Kyrpides N."/>
            <person name="Lykidis A."/>
            <person name="Hemme C."/>
            <person name="Fields M.W."/>
            <person name="He Z."/>
            <person name="Zhou J."/>
            <person name="Richardson P."/>
        </authorList>
    </citation>
    <scope>NUCLEOTIDE SEQUENCE [LARGE SCALE GENOMIC DNA]</scope>
    <source>
        <strain>ATCC 33223 / DSM 2355 / 39E</strain>
    </source>
</reference>
<organism>
    <name type="scientific">Thermoanaerobacter pseudethanolicus (strain ATCC 33223 / 39E)</name>
    <name type="common">Clostridium thermohydrosulfuricum</name>
    <dbReference type="NCBI Taxonomy" id="340099"/>
    <lineage>
        <taxon>Bacteria</taxon>
        <taxon>Bacillati</taxon>
        <taxon>Bacillota</taxon>
        <taxon>Clostridia</taxon>
        <taxon>Thermoanaerobacterales</taxon>
        <taxon>Thermoanaerobacteraceae</taxon>
        <taxon>Thermoanaerobacter</taxon>
    </lineage>
</organism>
<proteinExistence type="inferred from homology"/>
<evidence type="ECO:0000255" key="1">
    <source>
        <dbReference type="HAMAP-Rule" id="MF_00366"/>
    </source>
</evidence>
<protein>
    <recommendedName>
        <fullName evidence="1">DNA-directed RNA polymerase subunit omega</fullName>
        <shortName evidence="1">RNAP omega subunit</shortName>
        <ecNumber evidence="1">2.7.7.6</ecNumber>
    </recommendedName>
    <alternativeName>
        <fullName evidence="1">RNA polymerase omega subunit</fullName>
    </alternativeName>
    <alternativeName>
        <fullName evidence="1">Transcriptase subunit omega</fullName>
    </alternativeName>
</protein>
<sequence length="70" mass="7872">MILYPSIVDLMEKVDSKYTLCSLVAKRARQLIAGDTKLVDIDSDKPVTIATEEVNNGLITYQRPKKYGIK</sequence>
<feature type="chain" id="PRO_1000121284" description="DNA-directed RNA polymerase subunit omega">
    <location>
        <begin position="1"/>
        <end position="70"/>
    </location>
</feature>
<gene>
    <name evidence="1" type="primary">rpoZ</name>
    <name type="ordered locus">Teth39_1323</name>
</gene>
<dbReference type="EC" id="2.7.7.6" evidence="1"/>
<dbReference type="EMBL" id="CP000924">
    <property type="protein sequence ID" value="ABY94977.1"/>
    <property type="molecule type" value="Genomic_DNA"/>
</dbReference>
<dbReference type="RefSeq" id="WP_003868205.1">
    <property type="nucleotide sequence ID" value="NC_010321.1"/>
</dbReference>
<dbReference type="SMR" id="B0KA14"/>
<dbReference type="STRING" id="340099.Teth39_1323"/>
<dbReference type="KEGG" id="tpd:Teth39_1323"/>
<dbReference type="eggNOG" id="COG1758">
    <property type="taxonomic scope" value="Bacteria"/>
</dbReference>
<dbReference type="HOGENOM" id="CLU_125406_6_1_9"/>
<dbReference type="Proteomes" id="UP000002156">
    <property type="component" value="Chromosome"/>
</dbReference>
<dbReference type="GO" id="GO:0000428">
    <property type="term" value="C:DNA-directed RNA polymerase complex"/>
    <property type="evidence" value="ECO:0007669"/>
    <property type="project" value="UniProtKB-KW"/>
</dbReference>
<dbReference type="GO" id="GO:0003677">
    <property type="term" value="F:DNA binding"/>
    <property type="evidence" value="ECO:0007669"/>
    <property type="project" value="UniProtKB-UniRule"/>
</dbReference>
<dbReference type="GO" id="GO:0003899">
    <property type="term" value="F:DNA-directed RNA polymerase activity"/>
    <property type="evidence" value="ECO:0007669"/>
    <property type="project" value="UniProtKB-UniRule"/>
</dbReference>
<dbReference type="GO" id="GO:0006351">
    <property type="term" value="P:DNA-templated transcription"/>
    <property type="evidence" value="ECO:0007669"/>
    <property type="project" value="UniProtKB-UniRule"/>
</dbReference>
<dbReference type="Gene3D" id="3.90.940.10">
    <property type="match status" value="1"/>
</dbReference>
<dbReference type="HAMAP" id="MF_00366">
    <property type="entry name" value="RNApol_bact_RpoZ"/>
    <property type="match status" value="1"/>
</dbReference>
<dbReference type="InterPro" id="IPR003716">
    <property type="entry name" value="DNA-dir_RNA_pol_omega"/>
</dbReference>
<dbReference type="InterPro" id="IPR006110">
    <property type="entry name" value="Pol_omega/Rpo6/RPB6"/>
</dbReference>
<dbReference type="InterPro" id="IPR036161">
    <property type="entry name" value="RPB6/omega-like_sf"/>
</dbReference>
<dbReference type="NCBIfam" id="TIGR00690">
    <property type="entry name" value="rpoZ"/>
    <property type="match status" value="1"/>
</dbReference>
<dbReference type="PANTHER" id="PTHR34476">
    <property type="entry name" value="DNA-DIRECTED RNA POLYMERASE SUBUNIT OMEGA"/>
    <property type="match status" value="1"/>
</dbReference>
<dbReference type="PANTHER" id="PTHR34476:SF1">
    <property type="entry name" value="DNA-DIRECTED RNA POLYMERASE SUBUNIT OMEGA"/>
    <property type="match status" value="1"/>
</dbReference>
<dbReference type="Pfam" id="PF01192">
    <property type="entry name" value="RNA_pol_Rpb6"/>
    <property type="match status" value="1"/>
</dbReference>
<dbReference type="SMART" id="SM01409">
    <property type="entry name" value="RNA_pol_Rpb6"/>
    <property type="match status" value="1"/>
</dbReference>
<dbReference type="SUPFAM" id="SSF63562">
    <property type="entry name" value="RPB6/omega subunit-like"/>
    <property type="match status" value="1"/>
</dbReference>
<keyword id="KW-0240">DNA-directed RNA polymerase</keyword>
<keyword id="KW-0548">Nucleotidyltransferase</keyword>
<keyword id="KW-1185">Reference proteome</keyword>
<keyword id="KW-0804">Transcription</keyword>
<keyword id="KW-0808">Transferase</keyword>
<comment type="function">
    <text evidence="1">Promotes RNA polymerase assembly. Latches the N- and C-terminal regions of the beta' subunit thereby facilitating its interaction with the beta and alpha subunits.</text>
</comment>
<comment type="catalytic activity">
    <reaction evidence="1">
        <text>RNA(n) + a ribonucleoside 5'-triphosphate = RNA(n+1) + diphosphate</text>
        <dbReference type="Rhea" id="RHEA:21248"/>
        <dbReference type="Rhea" id="RHEA-COMP:14527"/>
        <dbReference type="Rhea" id="RHEA-COMP:17342"/>
        <dbReference type="ChEBI" id="CHEBI:33019"/>
        <dbReference type="ChEBI" id="CHEBI:61557"/>
        <dbReference type="ChEBI" id="CHEBI:140395"/>
        <dbReference type="EC" id="2.7.7.6"/>
    </reaction>
</comment>
<comment type="subunit">
    <text evidence="1">The RNAP catalytic core consists of 2 alpha, 1 beta, 1 beta' and 1 omega subunit. When a sigma factor is associated with the core the holoenzyme is formed, which can initiate transcription.</text>
</comment>
<comment type="similarity">
    <text evidence="1">Belongs to the RNA polymerase subunit omega family.</text>
</comment>
<name>RPOZ_THEP3</name>
<accession>B0KA14</accession>